<name>HPFH_KLEOX</name>
<dbReference type="EC" id="1.97.1.-" evidence="7"/>
<dbReference type="EMBL" id="QJJG01000028">
    <property type="protein sequence ID" value="PXW36760.1"/>
    <property type="molecule type" value="Genomic_DNA"/>
</dbReference>
<dbReference type="RefSeq" id="WP_110277114.1">
    <property type="nucleotide sequence ID" value="NZ_QJJG01000028.1"/>
</dbReference>
<dbReference type="SMR" id="A0A318FEA4"/>
<dbReference type="UniPathway" id="UPA00338"/>
<dbReference type="Proteomes" id="UP000247485">
    <property type="component" value="Unassembled WGS sequence"/>
</dbReference>
<dbReference type="GO" id="GO:0051539">
    <property type="term" value="F:4 iron, 4 sulfur cluster binding"/>
    <property type="evidence" value="ECO:0007669"/>
    <property type="project" value="UniProtKB-KW"/>
</dbReference>
<dbReference type="GO" id="GO:0046872">
    <property type="term" value="F:metal ion binding"/>
    <property type="evidence" value="ECO:0007669"/>
    <property type="project" value="UniProtKB-KW"/>
</dbReference>
<dbReference type="GO" id="GO:0016491">
    <property type="term" value="F:oxidoreductase activity"/>
    <property type="evidence" value="ECO:0007669"/>
    <property type="project" value="UniProtKB-KW"/>
</dbReference>
<dbReference type="GO" id="GO:0046306">
    <property type="term" value="P:alkanesulfonate catabolic process"/>
    <property type="evidence" value="ECO:0007669"/>
    <property type="project" value="UniProtKB-UniPathway"/>
</dbReference>
<dbReference type="CDD" id="cd01335">
    <property type="entry name" value="Radical_SAM"/>
    <property type="match status" value="1"/>
</dbReference>
<dbReference type="Gene3D" id="3.30.70.20">
    <property type="match status" value="1"/>
</dbReference>
<dbReference type="Gene3D" id="3.20.20.70">
    <property type="entry name" value="Aldolase class I"/>
    <property type="match status" value="1"/>
</dbReference>
<dbReference type="InterPro" id="IPR017896">
    <property type="entry name" value="4Fe4S_Fe-S-bd"/>
</dbReference>
<dbReference type="InterPro" id="IPR017900">
    <property type="entry name" value="4Fe4S_Fe_S_CS"/>
</dbReference>
<dbReference type="InterPro" id="IPR013785">
    <property type="entry name" value="Aldolase_TIM"/>
</dbReference>
<dbReference type="InterPro" id="IPR040074">
    <property type="entry name" value="BssD/PflA/YjjW"/>
</dbReference>
<dbReference type="InterPro" id="IPR034457">
    <property type="entry name" value="Organic_radical-activating"/>
</dbReference>
<dbReference type="InterPro" id="IPR012839">
    <property type="entry name" value="Organic_radical_activase"/>
</dbReference>
<dbReference type="InterPro" id="IPR001989">
    <property type="entry name" value="Radical_activat_CS"/>
</dbReference>
<dbReference type="InterPro" id="IPR007197">
    <property type="entry name" value="rSAM"/>
</dbReference>
<dbReference type="NCBIfam" id="TIGR02494">
    <property type="entry name" value="PFLE_PFLC"/>
    <property type="match status" value="1"/>
</dbReference>
<dbReference type="PANTHER" id="PTHR30352:SF4">
    <property type="entry name" value="PYRUVATE FORMATE-LYASE 2-ACTIVATING ENZYME"/>
    <property type="match status" value="1"/>
</dbReference>
<dbReference type="PANTHER" id="PTHR30352">
    <property type="entry name" value="PYRUVATE FORMATE-LYASE-ACTIVATING ENZYME"/>
    <property type="match status" value="1"/>
</dbReference>
<dbReference type="Pfam" id="PF13353">
    <property type="entry name" value="Fer4_12"/>
    <property type="match status" value="2"/>
</dbReference>
<dbReference type="Pfam" id="PF04055">
    <property type="entry name" value="Radical_SAM"/>
    <property type="match status" value="1"/>
</dbReference>
<dbReference type="PIRSF" id="PIRSF000371">
    <property type="entry name" value="PFL_act_enz"/>
    <property type="match status" value="1"/>
</dbReference>
<dbReference type="SFLD" id="SFLDG01118">
    <property type="entry name" value="activating_enzymes__group_2"/>
    <property type="match status" value="1"/>
</dbReference>
<dbReference type="SFLD" id="SFLDG01066">
    <property type="entry name" value="organic_radical-activating_enz"/>
    <property type="match status" value="1"/>
</dbReference>
<dbReference type="SUPFAM" id="SSF54862">
    <property type="entry name" value="4Fe-4S ferredoxins"/>
    <property type="match status" value="1"/>
</dbReference>
<dbReference type="SUPFAM" id="SSF102114">
    <property type="entry name" value="Radical SAM enzymes"/>
    <property type="match status" value="1"/>
</dbReference>
<dbReference type="PROSITE" id="PS00198">
    <property type="entry name" value="4FE4S_FER_1"/>
    <property type="match status" value="1"/>
</dbReference>
<dbReference type="PROSITE" id="PS51379">
    <property type="entry name" value="4FE4S_FER_2"/>
    <property type="match status" value="2"/>
</dbReference>
<dbReference type="PROSITE" id="PS01087">
    <property type="entry name" value="RADICAL_ACTIVATING"/>
    <property type="match status" value="1"/>
</dbReference>
<dbReference type="PROSITE" id="PS51918">
    <property type="entry name" value="RADICAL_SAM"/>
    <property type="match status" value="1"/>
</dbReference>
<sequence>MNQSPPGIIFNIQRFTIHDGPGLRTELFLKGCPLRCEWCSNPESFMPYAQVGVYKTKCISYKKCAACEETCPQENILQFTRGKLTSIERHDCTNCLACHNACPSDAIKLWGKSMSVEECMEEIRKDKGYYERSGGGVTVSGGEPLLQSEFVAKLFQACRSEGIQTCLESSLYVPWKKVQNVLPYTDLIISDIKHMDPEIHKKYTKVSNDKILKNLIKLTAEKRNIILRIPVIPNVNDDMVNIESTADFILNELGGKIRTLQLLSFMRLGEEKYTALGLPYKMKNVKVNRRSFQKHIQMLAEYFNQRGIHCVVGTKEK</sequence>
<keyword id="KW-0004">4Fe-4S</keyword>
<keyword id="KW-0408">Iron</keyword>
<keyword id="KW-0411">Iron-sulfur</keyword>
<keyword id="KW-0479">Metal-binding</keyword>
<keyword id="KW-0560">Oxidoreductase</keyword>
<keyword id="KW-0677">Repeat</keyword>
<keyword id="KW-0949">S-adenosyl-L-methionine</keyword>
<feature type="chain" id="PRO_0000457587" description="(2S)-3-sulfopropanediol dehydratase activating enzyme">
    <location>
        <begin position="1"/>
        <end position="317"/>
    </location>
</feature>
<feature type="domain" description="Radical SAM core" evidence="3">
    <location>
        <begin position="18"/>
        <end position="306"/>
    </location>
</feature>
<feature type="domain" description="4Fe-4S ferredoxin-type 1" evidence="2">
    <location>
        <begin position="49"/>
        <end position="82"/>
    </location>
</feature>
<feature type="domain" description="4Fe-4S ferredoxin-type 2" evidence="2">
    <location>
        <begin position="83"/>
        <end position="112"/>
    </location>
</feature>
<feature type="binding site" evidence="3">
    <location>
        <position position="32"/>
    </location>
    <ligand>
        <name>[4Fe-4S] cluster</name>
        <dbReference type="ChEBI" id="CHEBI:49883"/>
        <label>1</label>
        <note>4Fe-4S-S-AdoMet</note>
    </ligand>
</feature>
<feature type="binding site" evidence="3">
    <location>
        <position position="36"/>
    </location>
    <ligand>
        <name>[4Fe-4S] cluster</name>
        <dbReference type="ChEBI" id="CHEBI:49883"/>
        <label>1</label>
        <note>4Fe-4S-S-AdoMet</note>
    </ligand>
</feature>
<feature type="binding site" evidence="1">
    <location>
        <begin position="38"/>
        <end position="40"/>
    </location>
    <ligand>
        <name>S-adenosyl-L-methionine</name>
        <dbReference type="ChEBI" id="CHEBI:59789"/>
    </ligand>
</feature>
<feature type="binding site" evidence="3">
    <location>
        <position position="39"/>
    </location>
    <ligand>
        <name>[4Fe-4S] cluster</name>
        <dbReference type="ChEBI" id="CHEBI:49883"/>
        <label>1</label>
        <note>4Fe-4S-S-AdoMet</note>
    </ligand>
</feature>
<feature type="binding site" evidence="2">
    <location>
        <position position="58"/>
    </location>
    <ligand>
        <name>[4Fe-4S] cluster</name>
        <dbReference type="ChEBI" id="CHEBI:49883"/>
        <label>2</label>
    </ligand>
</feature>
<feature type="binding site" evidence="2">
    <location>
        <position position="64"/>
    </location>
    <ligand>
        <name>[4Fe-4S] cluster</name>
        <dbReference type="ChEBI" id="CHEBI:49883"/>
        <label>2</label>
    </ligand>
</feature>
<feature type="binding site" evidence="2">
    <location>
        <position position="67"/>
    </location>
    <ligand>
        <name>[4Fe-4S] cluster</name>
        <dbReference type="ChEBI" id="CHEBI:49883"/>
        <label>2</label>
    </ligand>
</feature>
<feature type="binding site" evidence="2">
    <location>
        <position position="71"/>
    </location>
    <ligand>
        <name>[4Fe-4S] cluster</name>
        <dbReference type="ChEBI" id="CHEBI:49883"/>
        <label>3</label>
    </ligand>
</feature>
<feature type="binding site" evidence="2">
    <location>
        <position position="92"/>
    </location>
    <ligand>
        <name>[4Fe-4S] cluster</name>
        <dbReference type="ChEBI" id="CHEBI:49883"/>
        <label>3</label>
    </ligand>
</feature>
<feature type="binding site" evidence="2">
    <location>
        <position position="95"/>
    </location>
    <ligand>
        <name>[4Fe-4S] cluster</name>
        <dbReference type="ChEBI" id="CHEBI:49883"/>
        <label>3</label>
    </ligand>
</feature>
<feature type="binding site" evidence="2">
    <location>
        <position position="98"/>
    </location>
    <ligand>
        <name>[4Fe-4S] cluster</name>
        <dbReference type="ChEBI" id="CHEBI:49883"/>
        <label>3</label>
    </ligand>
</feature>
<feature type="binding site" evidence="2">
    <location>
        <position position="102"/>
    </location>
    <ligand>
        <name>[4Fe-4S] cluster</name>
        <dbReference type="ChEBI" id="CHEBI:49883"/>
        <label>2</label>
    </ligand>
</feature>
<feature type="binding site" evidence="1">
    <location>
        <position position="142"/>
    </location>
    <ligand>
        <name>S-adenosyl-L-methionine</name>
        <dbReference type="ChEBI" id="CHEBI:59789"/>
    </ligand>
</feature>
<feature type="binding site" evidence="1">
    <location>
        <begin position="191"/>
        <end position="193"/>
    </location>
    <ligand>
        <name>S-adenosyl-L-methionine</name>
        <dbReference type="ChEBI" id="CHEBI:59789"/>
    </ligand>
</feature>
<organism>
    <name type="scientific">Klebsiella oxytoca</name>
    <dbReference type="NCBI Taxonomy" id="571"/>
    <lineage>
        <taxon>Bacteria</taxon>
        <taxon>Pseudomonadati</taxon>
        <taxon>Pseudomonadota</taxon>
        <taxon>Gammaproteobacteria</taxon>
        <taxon>Enterobacterales</taxon>
        <taxon>Enterobacteriaceae</taxon>
        <taxon>Klebsiella/Raoultella group</taxon>
        <taxon>Klebsiella</taxon>
    </lineage>
</organism>
<proteinExistence type="inferred from homology"/>
<protein>
    <recommendedName>
        <fullName evidence="6">(2S)-3-sulfopropanediol dehydratase activating enzyme</fullName>
        <ecNumber evidence="7">1.97.1.-</ecNumber>
    </recommendedName>
</protein>
<evidence type="ECO:0000250" key="1">
    <source>
        <dbReference type="UniProtKB" id="P0A9N4"/>
    </source>
</evidence>
<evidence type="ECO:0000255" key="2">
    <source>
        <dbReference type="PROSITE-ProRule" id="PRU00711"/>
    </source>
</evidence>
<evidence type="ECO:0000255" key="3">
    <source>
        <dbReference type="PROSITE-ProRule" id="PRU01266"/>
    </source>
</evidence>
<evidence type="ECO:0000269" key="4">
    <source>
    </source>
</evidence>
<evidence type="ECO:0000303" key="5">
    <source>
    </source>
</evidence>
<evidence type="ECO:0000305" key="6"/>
<evidence type="ECO:0000305" key="7">
    <source>
    </source>
</evidence>
<evidence type="ECO:0000312" key="8">
    <source>
        <dbReference type="EMBL" id="PXW36760.1"/>
    </source>
</evidence>
<comment type="function">
    <text evidence="4">Involved in the degradation of the organosulfur compound 2(S)-dihydroxypropanesulfonate (DHPS) (PubMed:32571930). Catalyzes activation of the (2S)-3-sulfopropanediol dehydratase HpfG under anaerobic conditions by generation of an organic free radical on a glycine residue (PubMed:32571930).</text>
</comment>
<comment type="catalytic activity">
    <reaction evidence="7">
        <text>glycyl-[protein] + reduced [flavodoxin] + S-adenosyl-L-methionine = glycin-2-yl radical-[protein] + semiquinone [flavodoxin] + 5'-deoxyadenosine + L-methionine + H(+)</text>
        <dbReference type="Rhea" id="RHEA:61976"/>
        <dbReference type="Rhea" id="RHEA-COMP:10622"/>
        <dbReference type="Rhea" id="RHEA-COMP:14480"/>
        <dbReference type="Rhea" id="RHEA-COMP:15993"/>
        <dbReference type="Rhea" id="RHEA-COMP:15994"/>
        <dbReference type="ChEBI" id="CHEBI:15378"/>
        <dbReference type="ChEBI" id="CHEBI:17319"/>
        <dbReference type="ChEBI" id="CHEBI:29947"/>
        <dbReference type="ChEBI" id="CHEBI:32722"/>
        <dbReference type="ChEBI" id="CHEBI:57618"/>
        <dbReference type="ChEBI" id="CHEBI:57844"/>
        <dbReference type="ChEBI" id="CHEBI:59789"/>
        <dbReference type="ChEBI" id="CHEBI:140311"/>
    </reaction>
    <physiologicalReaction direction="left-to-right" evidence="7">
        <dbReference type="Rhea" id="RHEA:61977"/>
    </physiologicalReaction>
</comment>
<comment type="cofactor">
    <cofactor evidence="4">
        <name>[4Fe-4S] cluster</name>
        <dbReference type="ChEBI" id="CHEBI:49883"/>
    </cofactor>
    <text evidence="2 3">Binds 3 [4Fe-4S] clusters. One cluster is coordinated with 3 cysteines and an exchangeable S-adenosyl-L-methionine.</text>
</comment>
<comment type="pathway">
    <text evidence="7">Organosulfur degradation; alkanesulfonate degradation.</text>
</comment>
<comment type="similarity">
    <text evidence="6">Belongs to the organic radical-activating enzymes family.</text>
</comment>
<accession>A0A318FEA4</accession>
<gene>
    <name evidence="5" type="primary">hpfH</name>
    <name evidence="8" type="ORF">DET57_12838</name>
</gene>
<reference key="1">
    <citation type="submission" date="2018-05" db="EMBL/GenBank/DDBJ databases">
        <title>Freshwater and sediment microbial communities from various areas in North America, analyzing microbe dynamics in response to fracking.</title>
        <authorList>
            <person name="Lamendella R."/>
        </authorList>
    </citation>
    <scope>NUCLEOTIDE SEQUENCE [LARGE SCALE GENOMIC DNA]</scope>
    <source>
        <strain>67</strain>
    </source>
</reference>
<reference key="2">
    <citation type="journal article" date="2020" name="Proc. Natl. Acad. Sci. U.S.A.">
        <title>Two radical-dependent mechanisms for anaerobic degradation of the globally abundant organosulfur compound dihydroxypropanesulfonate.</title>
        <authorList>
            <person name="Liu J."/>
            <person name="Wei Y."/>
            <person name="Lin L."/>
            <person name="Teng L."/>
            <person name="Yin J."/>
            <person name="Lu Q."/>
            <person name="Chen J."/>
            <person name="Zheng Y."/>
            <person name="Li Y."/>
            <person name="Xu R."/>
            <person name="Zhai W."/>
            <person name="Liu Y."/>
            <person name="Liu Y."/>
            <person name="Cao P."/>
            <person name="Ang E.L."/>
            <person name="Zhao H."/>
            <person name="Yuchi Z."/>
            <person name="Zhang Y."/>
        </authorList>
    </citation>
    <scope>FUNCTION</scope>
    <scope>COFACTOR</scope>
</reference>